<dbReference type="EC" id="4.1.1.20" evidence="2"/>
<dbReference type="EMBL" id="AB083132">
    <property type="protein sequence ID" value="BAB88825.1"/>
    <property type="molecule type" value="Genomic_DNA"/>
</dbReference>
<dbReference type="EMBL" id="BA000035">
    <property type="protein sequence ID" value="BAC18087.1"/>
    <property type="molecule type" value="Genomic_DNA"/>
</dbReference>
<dbReference type="RefSeq" id="WP_006769238.1">
    <property type="nucleotide sequence ID" value="NC_004369.1"/>
</dbReference>
<dbReference type="SMR" id="Q8RQM6"/>
<dbReference type="STRING" id="196164.gene:10741686"/>
<dbReference type="KEGG" id="cef:CE1277"/>
<dbReference type="eggNOG" id="COG0019">
    <property type="taxonomic scope" value="Bacteria"/>
</dbReference>
<dbReference type="HOGENOM" id="CLU_026444_0_1_11"/>
<dbReference type="OrthoDB" id="9802241at2"/>
<dbReference type="UniPathway" id="UPA00034">
    <property type="reaction ID" value="UER00027"/>
</dbReference>
<dbReference type="Proteomes" id="UP000001409">
    <property type="component" value="Chromosome"/>
</dbReference>
<dbReference type="GO" id="GO:0008836">
    <property type="term" value="F:diaminopimelate decarboxylase activity"/>
    <property type="evidence" value="ECO:0007669"/>
    <property type="project" value="UniProtKB-UniRule"/>
</dbReference>
<dbReference type="GO" id="GO:0030170">
    <property type="term" value="F:pyridoxal phosphate binding"/>
    <property type="evidence" value="ECO:0007669"/>
    <property type="project" value="UniProtKB-UniRule"/>
</dbReference>
<dbReference type="GO" id="GO:0009089">
    <property type="term" value="P:lysine biosynthetic process via diaminopimelate"/>
    <property type="evidence" value="ECO:0007669"/>
    <property type="project" value="UniProtKB-UniRule"/>
</dbReference>
<dbReference type="CDD" id="cd06828">
    <property type="entry name" value="PLPDE_III_DapDC"/>
    <property type="match status" value="1"/>
</dbReference>
<dbReference type="FunFam" id="3.20.20.10:FF:000003">
    <property type="entry name" value="Diaminopimelate decarboxylase"/>
    <property type="match status" value="1"/>
</dbReference>
<dbReference type="Gene3D" id="3.20.20.10">
    <property type="entry name" value="Alanine racemase"/>
    <property type="match status" value="1"/>
</dbReference>
<dbReference type="Gene3D" id="2.40.37.10">
    <property type="entry name" value="Lyase, Ornithine Decarboxylase, Chain A, domain 1"/>
    <property type="match status" value="1"/>
</dbReference>
<dbReference type="HAMAP" id="MF_02120">
    <property type="entry name" value="LysA"/>
    <property type="match status" value="1"/>
</dbReference>
<dbReference type="InterPro" id="IPR009006">
    <property type="entry name" value="Ala_racemase/Decarboxylase_C"/>
</dbReference>
<dbReference type="InterPro" id="IPR002986">
    <property type="entry name" value="DAP_deCOOHase_LysA"/>
</dbReference>
<dbReference type="InterPro" id="IPR022643">
    <property type="entry name" value="De-COase2_C"/>
</dbReference>
<dbReference type="InterPro" id="IPR022657">
    <property type="entry name" value="De-COase2_CS"/>
</dbReference>
<dbReference type="InterPro" id="IPR022644">
    <property type="entry name" value="De-COase2_N"/>
</dbReference>
<dbReference type="InterPro" id="IPR022653">
    <property type="entry name" value="De-COase2_pyr-phos_BS"/>
</dbReference>
<dbReference type="InterPro" id="IPR000183">
    <property type="entry name" value="Orn/DAP/Arg_de-COase"/>
</dbReference>
<dbReference type="InterPro" id="IPR029066">
    <property type="entry name" value="PLP-binding_barrel"/>
</dbReference>
<dbReference type="NCBIfam" id="TIGR01048">
    <property type="entry name" value="lysA"/>
    <property type="match status" value="1"/>
</dbReference>
<dbReference type="PANTHER" id="PTHR43727">
    <property type="entry name" value="DIAMINOPIMELATE DECARBOXYLASE"/>
    <property type="match status" value="1"/>
</dbReference>
<dbReference type="PANTHER" id="PTHR43727:SF2">
    <property type="entry name" value="GROUP IV DECARBOXYLASE"/>
    <property type="match status" value="1"/>
</dbReference>
<dbReference type="Pfam" id="PF02784">
    <property type="entry name" value="Orn_Arg_deC_N"/>
    <property type="match status" value="1"/>
</dbReference>
<dbReference type="Pfam" id="PF00278">
    <property type="entry name" value="Orn_DAP_Arg_deC"/>
    <property type="match status" value="1"/>
</dbReference>
<dbReference type="PRINTS" id="PR01181">
    <property type="entry name" value="DAPDCRBXLASE"/>
</dbReference>
<dbReference type="PRINTS" id="PR01179">
    <property type="entry name" value="ODADCRBXLASE"/>
</dbReference>
<dbReference type="SUPFAM" id="SSF50621">
    <property type="entry name" value="Alanine racemase C-terminal domain-like"/>
    <property type="match status" value="1"/>
</dbReference>
<dbReference type="SUPFAM" id="SSF51419">
    <property type="entry name" value="PLP-binding barrel"/>
    <property type="match status" value="1"/>
</dbReference>
<dbReference type="PROSITE" id="PS00878">
    <property type="entry name" value="ODR_DC_2_1"/>
    <property type="match status" value="1"/>
</dbReference>
<dbReference type="PROSITE" id="PS00879">
    <property type="entry name" value="ODR_DC_2_2"/>
    <property type="match status" value="1"/>
</dbReference>
<proteinExistence type="inferred from homology"/>
<feature type="chain" id="PRO_0000149920" description="Diaminopimelate decarboxylase">
    <location>
        <begin position="1"/>
        <end position="459"/>
    </location>
</feature>
<feature type="active site" description="Proton donor" evidence="1">
    <location>
        <position position="388"/>
    </location>
</feature>
<feature type="binding site" evidence="2">
    <location>
        <position position="271"/>
    </location>
    <ligand>
        <name>pyridoxal 5'-phosphate</name>
        <dbReference type="ChEBI" id="CHEBI:597326"/>
    </ligand>
</feature>
<feature type="binding site" evidence="2">
    <location>
        <begin position="313"/>
        <end position="316"/>
    </location>
    <ligand>
        <name>pyridoxal 5'-phosphate</name>
        <dbReference type="ChEBI" id="CHEBI:597326"/>
    </ligand>
</feature>
<feature type="binding site" evidence="2">
    <location>
        <position position="316"/>
    </location>
    <ligand>
        <name>substrate</name>
    </ligand>
</feature>
<feature type="binding site" evidence="2">
    <location>
        <position position="357"/>
    </location>
    <ligand>
        <name>substrate</name>
    </ligand>
</feature>
<feature type="binding site" evidence="2">
    <location>
        <position position="361"/>
    </location>
    <ligand>
        <name>substrate</name>
    </ligand>
</feature>
<feature type="binding site" evidence="2">
    <location>
        <position position="389"/>
    </location>
    <ligand>
        <name>substrate</name>
    </ligand>
</feature>
<feature type="binding site" evidence="2">
    <location>
        <position position="418"/>
    </location>
    <ligand>
        <name>pyridoxal 5'-phosphate</name>
        <dbReference type="ChEBI" id="CHEBI:597326"/>
    </ligand>
</feature>
<feature type="binding site" evidence="2">
    <location>
        <position position="418"/>
    </location>
    <ligand>
        <name>substrate</name>
    </ligand>
</feature>
<feature type="modified residue" description="N6-(pyridoxal phosphate)lysine" evidence="2">
    <location>
        <position position="89"/>
    </location>
</feature>
<organism>
    <name type="scientific">Corynebacterium efficiens (strain DSM 44549 / YS-314 / AJ 12310 / JCM 11189 / NBRC 100395)</name>
    <dbReference type="NCBI Taxonomy" id="196164"/>
    <lineage>
        <taxon>Bacteria</taxon>
        <taxon>Bacillati</taxon>
        <taxon>Actinomycetota</taxon>
        <taxon>Actinomycetes</taxon>
        <taxon>Mycobacteriales</taxon>
        <taxon>Corynebacteriaceae</taxon>
        <taxon>Corynebacterium</taxon>
    </lineage>
</organism>
<gene>
    <name evidence="2" type="primary">lysA</name>
    <name type="ordered locus">CE1277</name>
</gene>
<evidence type="ECO:0000255" key="1"/>
<evidence type="ECO:0000255" key="2">
    <source>
        <dbReference type="HAMAP-Rule" id="MF_02120"/>
    </source>
</evidence>
<keyword id="KW-0028">Amino-acid biosynthesis</keyword>
<keyword id="KW-0210">Decarboxylase</keyword>
<keyword id="KW-0456">Lyase</keyword>
<keyword id="KW-0457">Lysine biosynthesis</keyword>
<keyword id="KW-0663">Pyridoxal phosphate</keyword>
<keyword id="KW-1185">Reference proteome</keyword>
<comment type="function">
    <text evidence="2">Specifically catalyzes the decarboxylation of meso-diaminopimelate (meso-DAP) to L-lysine.</text>
</comment>
<comment type="catalytic activity">
    <reaction evidence="2">
        <text>meso-2,6-diaminopimelate + H(+) = L-lysine + CO2</text>
        <dbReference type="Rhea" id="RHEA:15101"/>
        <dbReference type="ChEBI" id="CHEBI:15378"/>
        <dbReference type="ChEBI" id="CHEBI:16526"/>
        <dbReference type="ChEBI" id="CHEBI:32551"/>
        <dbReference type="ChEBI" id="CHEBI:57791"/>
        <dbReference type="EC" id="4.1.1.20"/>
    </reaction>
</comment>
<comment type="cofactor">
    <cofactor evidence="2">
        <name>pyridoxal 5'-phosphate</name>
        <dbReference type="ChEBI" id="CHEBI:597326"/>
    </cofactor>
</comment>
<comment type="pathway">
    <text evidence="2">Amino-acid biosynthesis; L-lysine biosynthesis via DAP pathway; L-lysine from DL-2,6-diaminopimelate: step 1/1.</text>
</comment>
<comment type="subunit">
    <text evidence="2">Homodimer.</text>
</comment>
<comment type="similarity">
    <text evidence="2">Belongs to the Orn/Lys/Arg decarboxylase class-II family. LysA subfamily.</text>
</comment>
<name>DCDA_COREF</name>
<protein>
    <recommendedName>
        <fullName evidence="2">Diaminopimelate decarboxylase</fullName>
        <shortName evidence="2">DAP decarboxylase</shortName>
        <shortName evidence="2">DAPDC</shortName>
        <ecNumber evidence="2">4.1.1.20</ecNumber>
    </recommendedName>
</protein>
<sequence>MTAETETGIPGVPGTQAADQFNELPAHVWPRNAVRQEDGVVTVAGVPLPDLAEEYGTPLFVVDEDDFRARCRDMASAFGGPDRVHYASKAFLSKTVARWVDEEGLSLDIASENELGIALAADFPGERITAHGNNKDASFLRACVRNNLGHVVLDSAQELELLDYIAAGEGKVQPVLIRVKPGIEAHTHEFIATSHEDQKFGFSLASGAAFDAARAAVNAENLELVGLHCHVGSQVFDAQGFSLAAERVLELYSRIHDELGVTLAELDLGGGYGIAYTAAEEPLNVVEVAHDLLTAVGKTAAELGIEAPTVLVEPGRAIAGPSTVTVYEVGTIKDVDVDDETTRRYISVDGGMSDNIRPALYGAEYDARVVSRFTEGETTNTRVVGSHCESGDILINEATYPSDIHTGDLLALAATGAYCYAMSSRYNAFARPAVVSVRAGAAKLMLRRETLDDILSLEV</sequence>
<reference key="1">
    <citation type="submission" date="2002-04" db="EMBL/GenBank/DDBJ databases">
        <title>lysA of Corynebacterium efficiens.</title>
        <authorList>
            <person name="Itaya H."/>
            <person name="Kimura E."/>
            <person name="Kawahara Y."/>
            <person name="Sugimoto S."/>
        </authorList>
    </citation>
    <scope>NUCLEOTIDE SEQUENCE [GENOMIC DNA]</scope>
    <source>
        <strain>DSM 44549 / YS-314 / AJ 12310 / JCM 11189 / NBRC 100395</strain>
    </source>
</reference>
<reference key="2">
    <citation type="journal article" date="2003" name="Genome Res.">
        <title>Comparative complete genome sequence analysis of the amino acid replacements responsible for the thermostability of Corynebacterium efficiens.</title>
        <authorList>
            <person name="Nishio Y."/>
            <person name="Nakamura Y."/>
            <person name="Kawarabayasi Y."/>
            <person name="Usuda Y."/>
            <person name="Kimura E."/>
            <person name="Sugimoto S."/>
            <person name="Matsui K."/>
            <person name="Yamagishi A."/>
            <person name="Kikuchi H."/>
            <person name="Ikeo K."/>
            <person name="Gojobori T."/>
        </authorList>
    </citation>
    <scope>NUCLEOTIDE SEQUENCE [LARGE SCALE GENOMIC DNA]</scope>
    <source>
        <strain>DSM 44549 / YS-314 / AJ 12310 / JCM 11189 / NBRC 100395</strain>
    </source>
</reference>
<accession>Q8RQM6</accession>